<feature type="chain" id="PRO_0000062110" description="Large ribosomal subunit protein uL16">
    <location>
        <begin position="1"/>
        <end position="138"/>
    </location>
</feature>
<name>RL16_GLUOX</name>
<sequence length="138" mass="15226">MLSPKRTKFRKAHKGRIHGLAKSGTQLNFGAFGLKALEPERITARQIEASRRAITRAMKRAGRVWIRIFPDTPVSTKPAEVRMGSGKGNPEYWAARVKPGRILFEIEGVPPEVAKLALSLGAAKLPIKTKFVQRIGDA</sequence>
<protein>
    <recommendedName>
        <fullName evidence="1">Large ribosomal subunit protein uL16</fullName>
    </recommendedName>
    <alternativeName>
        <fullName evidence="2">50S ribosomal protein L16</fullName>
    </alternativeName>
</protein>
<gene>
    <name evidence="1" type="primary">rplP</name>
    <name type="ordered locus">GOX0373</name>
</gene>
<reference key="1">
    <citation type="journal article" date="2005" name="Nat. Biotechnol.">
        <title>Complete genome sequence of the acetic acid bacterium Gluconobacter oxydans.</title>
        <authorList>
            <person name="Prust C."/>
            <person name="Hoffmeister M."/>
            <person name="Liesegang H."/>
            <person name="Wiezer A."/>
            <person name="Fricke W.F."/>
            <person name="Ehrenreich A."/>
            <person name="Gottschalk G."/>
            <person name="Deppenmeier U."/>
        </authorList>
    </citation>
    <scope>NUCLEOTIDE SEQUENCE [LARGE SCALE GENOMIC DNA]</scope>
    <source>
        <strain>621H</strain>
    </source>
</reference>
<comment type="function">
    <text evidence="1">Binds 23S rRNA and is also seen to make contacts with the A and possibly P site tRNAs.</text>
</comment>
<comment type="subunit">
    <text evidence="1">Part of the 50S ribosomal subunit.</text>
</comment>
<comment type="similarity">
    <text evidence="1">Belongs to the universal ribosomal protein uL16 family.</text>
</comment>
<evidence type="ECO:0000255" key="1">
    <source>
        <dbReference type="HAMAP-Rule" id="MF_01342"/>
    </source>
</evidence>
<evidence type="ECO:0000305" key="2"/>
<dbReference type="EMBL" id="CP000009">
    <property type="protein sequence ID" value="AAW60156.1"/>
    <property type="molecule type" value="Genomic_DNA"/>
</dbReference>
<dbReference type="RefSeq" id="WP_011251959.1">
    <property type="nucleotide sequence ID" value="NZ_LT900338.1"/>
</dbReference>
<dbReference type="SMR" id="Q5FTZ0"/>
<dbReference type="STRING" id="290633.GOX0373"/>
<dbReference type="GeneID" id="76195075"/>
<dbReference type="KEGG" id="gox:GOX0373"/>
<dbReference type="eggNOG" id="COG0197">
    <property type="taxonomic scope" value="Bacteria"/>
</dbReference>
<dbReference type="HOGENOM" id="CLU_078858_2_1_5"/>
<dbReference type="Proteomes" id="UP000006375">
    <property type="component" value="Chromosome"/>
</dbReference>
<dbReference type="GO" id="GO:0022625">
    <property type="term" value="C:cytosolic large ribosomal subunit"/>
    <property type="evidence" value="ECO:0007669"/>
    <property type="project" value="TreeGrafter"/>
</dbReference>
<dbReference type="GO" id="GO:0019843">
    <property type="term" value="F:rRNA binding"/>
    <property type="evidence" value="ECO:0007669"/>
    <property type="project" value="UniProtKB-UniRule"/>
</dbReference>
<dbReference type="GO" id="GO:0003735">
    <property type="term" value="F:structural constituent of ribosome"/>
    <property type="evidence" value="ECO:0007669"/>
    <property type="project" value="InterPro"/>
</dbReference>
<dbReference type="GO" id="GO:0000049">
    <property type="term" value="F:tRNA binding"/>
    <property type="evidence" value="ECO:0007669"/>
    <property type="project" value="UniProtKB-KW"/>
</dbReference>
<dbReference type="GO" id="GO:0006412">
    <property type="term" value="P:translation"/>
    <property type="evidence" value="ECO:0007669"/>
    <property type="project" value="UniProtKB-UniRule"/>
</dbReference>
<dbReference type="CDD" id="cd01433">
    <property type="entry name" value="Ribosomal_L16_L10e"/>
    <property type="match status" value="1"/>
</dbReference>
<dbReference type="FunFam" id="3.90.1170.10:FF:000001">
    <property type="entry name" value="50S ribosomal protein L16"/>
    <property type="match status" value="1"/>
</dbReference>
<dbReference type="Gene3D" id="3.90.1170.10">
    <property type="entry name" value="Ribosomal protein L10e/L16"/>
    <property type="match status" value="1"/>
</dbReference>
<dbReference type="HAMAP" id="MF_01342">
    <property type="entry name" value="Ribosomal_uL16"/>
    <property type="match status" value="1"/>
</dbReference>
<dbReference type="InterPro" id="IPR047873">
    <property type="entry name" value="Ribosomal_uL16"/>
</dbReference>
<dbReference type="InterPro" id="IPR000114">
    <property type="entry name" value="Ribosomal_uL16_bact-type"/>
</dbReference>
<dbReference type="InterPro" id="IPR020798">
    <property type="entry name" value="Ribosomal_uL16_CS"/>
</dbReference>
<dbReference type="InterPro" id="IPR016180">
    <property type="entry name" value="Ribosomal_uL16_dom"/>
</dbReference>
<dbReference type="InterPro" id="IPR036920">
    <property type="entry name" value="Ribosomal_uL16_sf"/>
</dbReference>
<dbReference type="NCBIfam" id="TIGR01164">
    <property type="entry name" value="rplP_bact"/>
    <property type="match status" value="1"/>
</dbReference>
<dbReference type="PANTHER" id="PTHR12220">
    <property type="entry name" value="50S/60S RIBOSOMAL PROTEIN L16"/>
    <property type="match status" value="1"/>
</dbReference>
<dbReference type="PANTHER" id="PTHR12220:SF13">
    <property type="entry name" value="LARGE RIBOSOMAL SUBUNIT PROTEIN UL16M"/>
    <property type="match status" value="1"/>
</dbReference>
<dbReference type="Pfam" id="PF00252">
    <property type="entry name" value="Ribosomal_L16"/>
    <property type="match status" value="1"/>
</dbReference>
<dbReference type="PRINTS" id="PR00060">
    <property type="entry name" value="RIBOSOMALL16"/>
</dbReference>
<dbReference type="SUPFAM" id="SSF54686">
    <property type="entry name" value="Ribosomal protein L16p/L10e"/>
    <property type="match status" value="1"/>
</dbReference>
<dbReference type="PROSITE" id="PS00586">
    <property type="entry name" value="RIBOSOMAL_L16_1"/>
    <property type="match status" value="1"/>
</dbReference>
<dbReference type="PROSITE" id="PS00701">
    <property type="entry name" value="RIBOSOMAL_L16_2"/>
    <property type="match status" value="1"/>
</dbReference>
<keyword id="KW-1185">Reference proteome</keyword>
<keyword id="KW-0687">Ribonucleoprotein</keyword>
<keyword id="KW-0689">Ribosomal protein</keyword>
<keyword id="KW-0694">RNA-binding</keyword>
<keyword id="KW-0699">rRNA-binding</keyword>
<keyword id="KW-0820">tRNA-binding</keyword>
<accession>Q5FTZ0</accession>
<organism>
    <name type="scientific">Gluconobacter oxydans (strain 621H)</name>
    <name type="common">Gluconobacter suboxydans</name>
    <dbReference type="NCBI Taxonomy" id="290633"/>
    <lineage>
        <taxon>Bacteria</taxon>
        <taxon>Pseudomonadati</taxon>
        <taxon>Pseudomonadota</taxon>
        <taxon>Alphaproteobacteria</taxon>
        <taxon>Acetobacterales</taxon>
        <taxon>Acetobacteraceae</taxon>
        <taxon>Gluconobacter</taxon>
    </lineage>
</organism>
<proteinExistence type="inferred from homology"/>